<gene>
    <name type="primary">vac8</name>
    <name type="ORF">SPBC354.14c</name>
</gene>
<comment type="function">
    <text evidence="1">Functions in both vacuole inheritance and protein targeting from the cytoplasm to vacuole.</text>
</comment>
<comment type="subcellular location">
    <subcellularLocation>
        <location evidence="3">Golgi apparatus membrane</location>
        <topology evidence="3">Lipid-anchor</topology>
    </subcellularLocation>
    <subcellularLocation>
        <location evidence="3">Vacuole membrane</location>
        <topology evidence="3">Lipid-anchor</topology>
    </subcellularLocation>
</comment>
<comment type="similarity">
    <text evidence="5">Belongs to the beta-catenin family.</text>
</comment>
<accession>O43028</accession>
<feature type="initiator methionine" description="Removed" evidence="1">
    <location>
        <position position="1"/>
    </location>
</feature>
<feature type="chain" id="PRO_0000256217" description="Vacuolar protein 8">
    <location>
        <begin position="2"/>
        <end position="550"/>
    </location>
</feature>
<feature type="repeat" description="ARM 1">
    <location>
        <begin position="75"/>
        <end position="114"/>
    </location>
</feature>
<feature type="repeat" description="ARM 2">
    <location>
        <begin position="116"/>
        <end position="155"/>
    </location>
</feature>
<feature type="repeat" description="ARM 3">
    <location>
        <begin position="157"/>
        <end position="196"/>
    </location>
</feature>
<feature type="repeat" description="ARM 4">
    <location>
        <begin position="198"/>
        <end position="237"/>
    </location>
</feature>
<feature type="repeat" description="ARM 5">
    <location>
        <begin position="241"/>
        <end position="280"/>
    </location>
</feature>
<feature type="repeat" description="ARM 6">
    <location>
        <begin position="282"/>
        <end position="321"/>
    </location>
</feature>
<feature type="repeat" description="ARM 7">
    <location>
        <begin position="323"/>
        <end position="363"/>
    </location>
</feature>
<feature type="repeat" description="ARM 8">
    <location>
        <begin position="454"/>
        <end position="493"/>
    </location>
</feature>
<feature type="modified residue" description="Phosphothreonine" evidence="4">
    <location>
        <position position="548"/>
    </location>
</feature>
<feature type="modified residue" description="Phosphoserine" evidence="4">
    <location>
        <position position="550"/>
    </location>
</feature>
<feature type="lipid moiety-binding region" description="N-myristoyl glycine" evidence="1">
    <location>
        <position position="2"/>
    </location>
</feature>
<feature type="lipid moiety-binding region" description="S-palmitoyl cysteine" evidence="2">
    <location>
        <position position="4"/>
    </location>
</feature>
<feature type="lipid moiety-binding region" description="S-palmitoyl cysteine" evidence="2">
    <location>
        <position position="7"/>
    </location>
</feature>
<proteinExistence type="evidence at protein level"/>
<sequence>MGNCLSCCEKSKDEQYEPLLADREREAVADLLSFLEDRNEVNFYSEEPLRALTILAYSDNLDLQRSAALAFAEITEKDVREVDRETIEPVLFLLQSPDAEIQRAASVALGNLAVNAENKALVVKLNGLDLLIRQMMSPHVEVQCNAVGCITNLATLDENKSKIAHSGALGPLTRLAKSKDIRVQRNATGALLNMTHSYENRQQLVSAGTIPVLVSLLPSSDTDVQYYCTTSISNIAVDAVHRKRLAQSEPKLVRSLIQLMDTSSPKVQCQAALALRNLASDERYQIEIVQSNALPSLLRLLRSSYLPLILASVACIRNISIHPLNESPIIDAGFLRPLVDLLSCTENEEIQCHAVSTLRNLAASSERNKRAIIEANAIQKLRCLILDAPVSVQSEMTACLAVLALSDEFKSYLLNFGICNVLIPLTDSMSIEVQGNSAAALGNLSSNVDDYSRFIECWDSPAGGIHGYLVRFLSSEDSTFAHIAAWTIVQLLEAGVPRLTAFIQSSDDIIELLNDIVARDANNGEYEDGEGDVILLSGRALHLIEQDTDS</sequence>
<keyword id="KW-0333">Golgi apparatus</keyword>
<keyword id="KW-0449">Lipoprotein</keyword>
<keyword id="KW-0472">Membrane</keyword>
<keyword id="KW-0519">Myristate</keyword>
<keyword id="KW-0564">Palmitate</keyword>
<keyword id="KW-0597">Phosphoprotein</keyword>
<keyword id="KW-1185">Reference proteome</keyword>
<keyword id="KW-0677">Repeat</keyword>
<keyword id="KW-0926">Vacuole</keyword>
<reference key="1">
    <citation type="journal article" date="2002" name="Nature">
        <title>The genome sequence of Schizosaccharomyces pombe.</title>
        <authorList>
            <person name="Wood V."/>
            <person name="Gwilliam R."/>
            <person name="Rajandream M.A."/>
            <person name="Lyne M.H."/>
            <person name="Lyne R."/>
            <person name="Stewart A."/>
            <person name="Sgouros J.G."/>
            <person name="Peat N."/>
            <person name="Hayles J."/>
            <person name="Baker S.G."/>
            <person name="Basham D."/>
            <person name="Bowman S."/>
            <person name="Brooks K."/>
            <person name="Brown D."/>
            <person name="Brown S."/>
            <person name="Chillingworth T."/>
            <person name="Churcher C.M."/>
            <person name="Collins M."/>
            <person name="Connor R."/>
            <person name="Cronin A."/>
            <person name="Davis P."/>
            <person name="Feltwell T."/>
            <person name="Fraser A."/>
            <person name="Gentles S."/>
            <person name="Goble A."/>
            <person name="Hamlin N."/>
            <person name="Harris D.E."/>
            <person name="Hidalgo J."/>
            <person name="Hodgson G."/>
            <person name="Holroyd S."/>
            <person name="Hornsby T."/>
            <person name="Howarth S."/>
            <person name="Huckle E.J."/>
            <person name="Hunt S."/>
            <person name="Jagels K."/>
            <person name="James K.D."/>
            <person name="Jones L."/>
            <person name="Jones M."/>
            <person name="Leather S."/>
            <person name="McDonald S."/>
            <person name="McLean J."/>
            <person name="Mooney P."/>
            <person name="Moule S."/>
            <person name="Mungall K.L."/>
            <person name="Murphy L.D."/>
            <person name="Niblett D."/>
            <person name="Odell C."/>
            <person name="Oliver K."/>
            <person name="O'Neil S."/>
            <person name="Pearson D."/>
            <person name="Quail M.A."/>
            <person name="Rabbinowitsch E."/>
            <person name="Rutherford K.M."/>
            <person name="Rutter S."/>
            <person name="Saunders D."/>
            <person name="Seeger K."/>
            <person name="Sharp S."/>
            <person name="Skelton J."/>
            <person name="Simmonds M.N."/>
            <person name="Squares R."/>
            <person name="Squares S."/>
            <person name="Stevens K."/>
            <person name="Taylor K."/>
            <person name="Taylor R.G."/>
            <person name="Tivey A."/>
            <person name="Walsh S.V."/>
            <person name="Warren T."/>
            <person name="Whitehead S."/>
            <person name="Woodward J.R."/>
            <person name="Volckaert G."/>
            <person name="Aert R."/>
            <person name="Robben J."/>
            <person name="Grymonprez B."/>
            <person name="Weltjens I."/>
            <person name="Vanstreels E."/>
            <person name="Rieger M."/>
            <person name="Schaefer M."/>
            <person name="Mueller-Auer S."/>
            <person name="Gabel C."/>
            <person name="Fuchs M."/>
            <person name="Duesterhoeft A."/>
            <person name="Fritzc C."/>
            <person name="Holzer E."/>
            <person name="Moestl D."/>
            <person name="Hilbert H."/>
            <person name="Borzym K."/>
            <person name="Langer I."/>
            <person name="Beck A."/>
            <person name="Lehrach H."/>
            <person name="Reinhardt R."/>
            <person name="Pohl T.M."/>
            <person name="Eger P."/>
            <person name="Zimmermann W."/>
            <person name="Wedler H."/>
            <person name="Wambutt R."/>
            <person name="Purnelle B."/>
            <person name="Goffeau A."/>
            <person name="Cadieu E."/>
            <person name="Dreano S."/>
            <person name="Gloux S."/>
            <person name="Lelaure V."/>
            <person name="Mottier S."/>
            <person name="Galibert F."/>
            <person name="Aves S.J."/>
            <person name="Xiang Z."/>
            <person name="Hunt C."/>
            <person name="Moore K."/>
            <person name="Hurst S.M."/>
            <person name="Lucas M."/>
            <person name="Rochet M."/>
            <person name="Gaillardin C."/>
            <person name="Tallada V.A."/>
            <person name="Garzon A."/>
            <person name="Thode G."/>
            <person name="Daga R.R."/>
            <person name="Cruzado L."/>
            <person name="Jimenez J."/>
            <person name="Sanchez M."/>
            <person name="del Rey F."/>
            <person name="Benito J."/>
            <person name="Dominguez A."/>
            <person name="Revuelta J.L."/>
            <person name="Moreno S."/>
            <person name="Armstrong J."/>
            <person name="Forsburg S.L."/>
            <person name="Cerutti L."/>
            <person name="Lowe T."/>
            <person name="McCombie W.R."/>
            <person name="Paulsen I."/>
            <person name="Potashkin J."/>
            <person name="Shpakovski G.V."/>
            <person name="Ussery D."/>
            <person name="Barrell B.G."/>
            <person name="Nurse P."/>
        </authorList>
    </citation>
    <scope>NUCLEOTIDE SEQUENCE [LARGE SCALE GENOMIC DNA]</scope>
    <source>
        <strain>972 / ATCC 24843</strain>
    </source>
</reference>
<reference key="2">
    <citation type="journal article" date="2006" name="Nat. Biotechnol.">
        <title>ORFeome cloning and global analysis of protein localization in the fission yeast Schizosaccharomyces pombe.</title>
        <authorList>
            <person name="Matsuyama A."/>
            <person name="Arai R."/>
            <person name="Yashiroda Y."/>
            <person name="Shirai A."/>
            <person name="Kamata A."/>
            <person name="Sekido S."/>
            <person name="Kobayashi Y."/>
            <person name="Hashimoto A."/>
            <person name="Hamamoto M."/>
            <person name="Hiraoka Y."/>
            <person name="Horinouchi S."/>
            <person name="Yoshida M."/>
        </authorList>
    </citation>
    <scope>SUBCELLULAR LOCATION [LARGE SCALE ANALYSIS]</scope>
</reference>
<reference key="3">
    <citation type="journal article" date="2008" name="J. Proteome Res.">
        <title>Phosphoproteome analysis of fission yeast.</title>
        <authorList>
            <person name="Wilson-Grady J.T."/>
            <person name="Villen J."/>
            <person name="Gygi S.P."/>
        </authorList>
    </citation>
    <scope>PHOSPHORYLATION [LARGE SCALE ANALYSIS] AT THR-548 AND SER-550</scope>
    <scope>IDENTIFICATION BY MASS SPECTROMETRY</scope>
</reference>
<organism>
    <name type="scientific">Schizosaccharomyces pombe (strain 972 / ATCC 24843)</name>
    <name type="common">Fission yeast</name>
    <dbReference type="NCBI Taxonomy" id="284812"/>
    <lineage>
        <taxon>Eukaryota</taxon>
        <taxon>Fungi</taxon>
        <taxon>Dikarya</taxon>
        <taxon>Ascomycota</taxon>
        <taxon>Taphrinomycotina</taxon>
        <taxon>Schizosaccharomycetes</taxon>
        <taxon>Schizosaccharomycetales</taxon>
        <taxon>Schizosaccharomycetaceae</taxon>
        <taxon>Schizosaccharomyces</taxon>
    </lineage>
</organism>
<dbReference type="EMBL" id="CU329671">
    <property type="protein sequence ID" value="CAA17814.2"/>
    <property type="molecule type" value="Genomic_DNA"/>
</dbReference>
<dbReference type="PIR" id="T40294">
    <property type="entry name" value="T40294"/>
</dbReference>
<dbReference type="RefSeq" id="NP_595238.1">
    <property type="nucleotide sequence ID" value="NM_001021144.2"/>
</dbReference>
<dbReference type="SMR" id="O43028"/>
<dbReference type="BioGRID" id="277525">
    <property type="interactions" value="4"/>
</dbReference>
<dbReference type="FunCoup" id="O43028">
    <property type="interactions" value="51"/>
</dbReference>
<dbReference type="STRING" id="284812.O43028"/>
<dbReference type="iPTMnet" id="O43028"/>
<dbReference type="PaxDb" id="4896-SPBC354.14c.1"/>
<dbReference type="EnsemblFungi" id="SPBC354.14c.1">
    <property type="protein sequence ID" value="SPBC354.14c.1:pep"/>
    <property type="gene ID" value="SPBC354.14c"/>
</dbReference>
<dbReference type="GeneID" id="2541010"/>
<dbReference type="KEGG" id="spo:2541010"/>
<dbReference type="PomBase" id="SPBC354.14c">
    <property type="gene designation" value="vac8"/>
</dbReference>
<dbReference type="VEuPathDB" id="FungiDB:SPBC354.14c"/>
<dbReference type="eggNOG" id="KOG4224">
    <property type="taxonomic scope" value="Eukaryota"/>
</dbReference>
<dbReference type="HOGENOM" id="CLU_021483_0_0_1"/>
<dbReference type="InParanoid" id="O43028"/>
<dbReference type="OMA" id="VWDKPDG"/>
<dbReference type="PhylomeDB" id="O43028"/>
<dbReference type="PRO" id="PR:O43028"/>
<dbReference type="Proteomes" id="UP000002485">
    <property type="component" value="Chromosome II"/>
</dbReference>
<dbReference type="GO" id="GO:0000329">
    <property type="term" value="C:fungal-type vacuole membrane"/>
    <property type="evidence" value="ECO:0007005"/>
    <property type="project" value="PomBase"/>
</dbReference>
<dbReference type="GO" id="GO:0005794">
    <property type="term" value="C:Golgi apparatus"/>
    <property type="evidence" value="ECO:0007005"/>
    <property type="project" value="PomBase"/>
</dbReference>
<dbReference type="GO" id="GO:0000139">
    <property type="term" value="C:Golgi membrane"/>
    <property type="evidence" value="ECO:0007669"/>
    <property type="project" value="UniProtKB-SubCell"/>
</dbReference>
<dbReference type="GO" id="GO:0043495">
    <property type="term" value="F:protein-membrane adaptor activity"/>
    <property type="evidence" value="ECO:0000318"/>
    <property type="project" value="GO_Central"/>
</dbReference>
<dbReference type="GO" id="GO:0000045">
    <property type="term" value="P:autophagosome assembly"/>
    <property type="evidence" value="ECO:0000318"/>
    <property type="project" value="GO_Central"/>
</dbReference>
<dbReference type="GO" id="GO:0071562">
    <property type="term" value="P:nucleus-vacuole junction assembly"/>
    <property type="evidence" value="ECO:0000318"/>
    <property type="project" value="GO_Central"/>
</dbReference>
<dbReference type="GO" id="GO:0042144">
    <property type="term" value="P:vacuole fusion, non-autophagic"/>
    <property type="evidence" value="ECO:0000266"/>
    <property type="project" value="PomBase"/>
</dbReference>
<dbReference type="FunFam" id="1.25.10.10:FF:000131">
    <property type="entry name" value="Vacuolar protein 8"/>
    <property type="match status" value="1"/>
</dbReference>
<dbReference type="FunFam" id="1.25.10.10:FF:000236">
    <property type="entry name" value="Vacuolar protein 8, variant"/>
    <property type="match status" value="1"/>
</dbReference>
<dbReference type="FunFam" id="1.25.10.10:FF:000128">
    <property type="entry name" value="Vacuolar protein-like protein 8"/>
    <property type="match status" value="1"/>
</dbReference>
<dbReference type="Gene3D" id="1.25.10.10">
    <property type="entry name" value="Leucine-rich Repeat Variant"/>
    <property type="match status" value="3"/>
</dbReference>
<dbReference type="InterPro" id="IPR011989">
    <property type="entry name" value="ARM-like"/>
</dbReference>
<dbReference type="InterPro" id="IPR016024">
    <property type="entry name" value="ARM-type_fold"/>
</dbReference>
<dbReference type="InterPro" id="IPR000225">
    <property type="entry name" value="Armadillo"/>
</dbReference>
<dbReference type="InterPro" id="IPR045156">
    <property type="entry name" value="Vac8"/>
</dbReference>
<dbReference type="PANTHER" id="PTHR47249">
    <property type="entry name" value="VACUOLAR PROTEIN 8"/>
    <property type="match status" value="1"/>
</dbReference>
<dbReference type="PANTHER" id="PTHR47249:SF1">
    <property type="entry name" value="VACUOLAR PROTEIN 8"/>
    <property type="match status" value="1"/>
</dbReference>
<dbReference type="Pfam" id="PF00514">
    <property type="entry name" value="Arm"/>
    <property type="match status" value="8"/>
</dbReference>
<dbReference type="SMART" id="SM00185">
    <property type="entry name" value="ARM"/>
    <property type="match status" value="9"/>
</dbReference>
<dbReference type="SUPFAM" id="SSF48371">
    <property type="entry name" value="ARM repeat"/>
    <property type="match status" value="1"/>
</dbReference>
<dbReference type="PROSITE" id="PS50176">
    <property type="entry name" value="ARM_REPEAT"/>
    <property type="match status" value="6"/>
</dbReference>
<name>VAC8_SCHPO</name>
<protein>
    <recommendedName>
        <fullName>Vacuolar protein 8</fullName>
    </recommendedName>
</protein>
<evidence type="ECO:0000250" key="1"/>
<evidence type="ECO:0000255" key="2"/>
<evidence type="ECO:0000269" key="3">
    <source>
    </source>
</evidence>
<evidence type="ECO:0000269" key="4">
    <source>
    </source>
</evidence>
<evidence type="ECO:0000305" key="5"/>